<gene>
    <name type="primary">MT-ND5</name>
    <name type="synonym">MTND5</name>
    <name type="synonym">NADH5</name>
    <name type="synonym">ND5</name>
</gene>
<keyword id="KW-0249">Electron transport</keyword>
<keyword id="KW-0472">Membrane</keyword>
<keyword id="KW-0496">Mitochondrion</keyword>
<keyword id="KW-0999">Mitochondrion inner membrane</keyword>
<keyword id="KW-0520">NAD</keyword>
<keyword id="KW-0679">Respiratory chain</keyword>
<keyword id="KW-1278">Translocase</keyword>
<keyword id="KW-0812">Transmembrane</keyword>
<keyword id="KW-1133">Transmembrane helix</keyword>
<keyword id="KW-0813">Transport</keyword>
<keyword id="KW-0830">Ubiquinone</keyword>
<proteinExistence type="inferred from homology"/>
<geneLocation type="mitochondrion"/>
<sequence>MSISQLSQMFMTCLSLTMIILILPITFSFITKPSNKWPFQVKNAVKLSFFVSLIPSITCLNLNLQSFTIYYQWFSISSTKINISLQFDQYSMIFMTIALYVTWSILEFAIYYMHTDILINRFFKYLLTFLIAMMILVTANNMFQLFIGWEGVGIMSFLLIGWWYGRADANMAALQAVIYNRVGDIGLMMTMSWLLINTNSWDIQQLFGLTKNMDTTLPATGLLLAATGKSAQFGLHPWLPAAMEGPTPVSALLHSSTMVVAGIFLLIRLHPLIENNNNILTAALCLGAITTLFTATCALTQNDIKKIVGFSTSSQLGLMMVAIGLNQPQLAFLHICTHAFFKAMLFLCSGSIIHSLNDEQDIRKMGGINKTLPLTSSCLTIGSLALMGTPFLAGFFSKDAIIEAINTSHLNAWALVLTLIATSFTAVYSLRIIYFVLMNHPRTLPLSPVNENNPLIANPIKRLAWGSIIAGLILCQYILPNKTQTLTMTPMLKLTALIVSLLGLLTALELASMANKQIKINPTKFTHNFSNMLGFYPHIMHRLMSKLPLMLGQISATQMSDQLWMEKLGPKGIAHTQLLVTQKITHVHKGLIKTYLSIMMLSIIIITIIIMIT</sequence>
<comment type="function">
    <text evidence="1">Core subunit of the mitochondrial membrane respiratory chain NADH dehydrogenase (Complex I) that is believed to belong to the minimal assembly required for catalysis. Complex I functions in the transfer of electrons from NADH to the respiratory chain. The immediate electron acceptor for the enzyme is believed to be ubiquinone (By similarity).</text>
</comment>
<comment type="catalytic activity">
    <reaction>
        <text>a ubiquinone + NADH + 5 H(+)(in) = a ubiquinol + NAD(+) + 4 H(+)(out)</text>
        <dbReference type="Rhea" id="RHEA:29091"/>
        <dbReference type="Rhea" id="RHEA-COMP:9565"/>
        <dbReference type="Rhea" id="RHEA-COMP:9566"/>
        <dbReference type="ChEBI" id="CHEBI:15378"/>
        <dbReference type="ChEBI" id="CHEBI:16389"/>
        <dbReference type="ChEBI" id="CHEBI:17976"/>
        <dbReference type="ChEBI" id="CHEBI:57540"/>
        <dbReference type="ChEBI" id="CHEBI:57945"/>
        <dbReference type="EC" id="7.1.1.2"/>
    </reaction>
</comment>
<comment type="subcellular location">
    <subcellularLocation>
        <location evidence="1">Mitochondrion inner membrane</location>
        <topology evidence="1">Multi-pass membrane protein</topology>
    </subcellularLocation>
</comment>
<comment type="similarity">
    <text evidence="3">Belongs to the complex I subunit 5 family.</text>
</comment>
<evidence type="ECO:0000250" key="1"/>
<evidence type="ECO:0000255" key="2"/>
<evidence type="ECO:0000305" key="3"/>
<protein>
    <recommendedName>
        <fullName>NADH-ubiquinone oxidoreductase chain 5</fullName>
        <ecNumber>7.1.1.2</ecNumber>
    </recommendedName>
    <alternativeName>
        <fullName>NADH dehydrogenase subunit 5</fullName>
    </alternativeName>
</protein>
<feature type="chain" id="PRO_0000118137" description="NADH-ubiquinone oxidoreductase chain 5">
    <location>
        <begin position="1"/>
        <end position="613"/>
    </location>
</feature>
<feature type="transmembrane region" description="Helical" evidence="2">
    <location>
        <begin position="10"/>
        <end position="30"/>
    </location>
</feature>
<feature type="transmembrane region" description="Helical" evidence="2">
    <location>
        <begin position="49"/>
        <end position="69"/>
    </location>
</feature>
<feature type="transmembrane region" description="Helical" evidence="2">
    <location>
        <begin position="92"/>
        <end position="112"/>
    </location>
</feature>
<feature type="transmembrane region" description="Helical" evidence="2">
    <location>
        <begin position="117"/>
        <end position="137"/>
    </location>
</feature>
<feature type="transmembrane region" description="Helical" evidence="2">
    <location>
        <begin position="145"/>
        <end position="165"/>
    </location>
</feature>
<feature type="transmembrane region" description="Helical" evidence="2">
    <location>
        <begin position="176"/>
        <end position="196"/>
    </location>
</feature>
<feature type="transmembrane region" description="Helical" evidence="2">
    <location>
        <begin position="247"/>
        <end position="267"/>
    </location>
</feature>
<feature type="transmembrane region" description="Helical" evidence="2">
    <location>
        <begin position="279"/>
        <end position="299"/>
    </location>
</feature>
<feature type="transmembrane region" description="Helical" evidence="2">
    <location>
        <begin position="307"/>
        <end position="327"/>
    </location>
</feature>
<feature type="transmembrane region" description="Helical" evidence="2">
    <location>
        <begin position="330"/>
        <end position="350"/>
    </location>
</feature>
<feature type="transmembrane region" description="Helical" evidence="2">
    <location>
        <begin position="376"/>
        <end position="396"/>
    </location>
</feature>
<feature type="transmembrane region" description="Helical" evidence="2">
    <location>
        <begin position="410"/>
        <end position="430"/>
    </location>
</feature>
<feature type="transmembrane region" description="Helical" evidence="2">
    <location>
        <begin position="455"/>
        <end position="475"/>
    </location>
</feature>
<feature type="transmembrane region" description="Helical" evidence="2">
    <location>
        <begin position="494"/>
        <end position="514"/>
    </location>
</feature>
<feature type="transmembrane region" description="Helical" evidence="2">
    <location>
        <begin position="592"/>
        <end position="612"/>
    </location>
</feature>
<dbReference type="EC" id="7.1.1.2"/>
<dbReference type="EMBL" id="U62532">
    <property type="protein sequence ID" value="AAC60315.1"/>
    <property type="molecule type" value="Genomic_DNA"/>
</dbReference>
<dbReference type="PIR" id="T11464">
    <property type="entry name" value="T11464"/>
</dbReference>
<dbReference type="RefSeq" id="NP_008326.1">
    <property type="nucleotide sequence ID" value="NC_001778.1"/>
</dbReference>
<dbReference type="SMR" id="Q95918"/>
<dbReference type="GeneID" id="808030"/>
<dbReference type="CTD" id="4540"/>
<dbReference type="GO" id="GO:0005743">
    <property type="term" value="C:mitochondrial inner membrane"/>
    <property type="evidence" value="ECO:0007669"/>
    <property type="project" value="UniProtKB-SubCell"/>
</dbReference>
<dbReference type="GO" id="GO:0008137">
    <property type="term" value="F:NADH dehydrogenase (ubiquinone) activity"/>
    <property type="evidence" value="ECO:0007669"/>
    <property type="project" value="UniProtKB-EC"/>
</dbReference>
<dbReference type="GO" id="GO:0042773">
    <property type="term" value="P:ATP synthesis coupled electron transport"/>
    <property type="evidence" value="ECO:0007669"/>
    <property type="project" value="InterPro"/>
</dbReference>
<dbReference type="GO" id="GO:0015990">
    <property type="term" value="P:electron transport coupled proton transport"/>
    <property type="evidence" value="ECO:0007669"/>
    <property type="project" value="TreeGrafter"/>
</dbReference>
<dbReference type="InterPro" id="IPR010934">
    <property type="entry name" value="NADH_DH_su5_C"/>
</dbReference>
<dbReference type="InterPro" id="IPR018393">
    <property type="entry name" value="NADHpl_OxRdtase_5_subgr"/>
</dbReference>
<dbReference type="InterPro" id="IPR001750">
    <property type="entry name" value="ND/Mrp_TM"/>
</dbReference>
<dbReference type="InterPro" id="IPR003945">
    <property type="entry name" value="NU5C-like"/>
</dbReference>
<dbReference type="InterPro" id="IPR001516">
    <property type="entry name" value="Proton_antipo_N"/>
</dbReference>
<dbReference type="NCBIfam" id="TIGR01974">
    <property type="entry name" value="NDH_I_L"/>
    <property type="match status" value="1"/>
</dbReference>
<dbReference type="PANTHER" id="PTHR42829">
    <property type="entry name" value="NADH-UBIQUINONE OXIDOREDUCTASE CHAIN 5"/>
    <property type="match status" value="1"/>
</dbReference>
<dbReference type="PANTHER" id="PTHR42829:SF2">
    <property type="entry name" value="NADH-UBIQUINONE OXIDOREDUCTASE CHAIN 5"/>
    <property type="match status" value="1"/>
</dbReference>
<dbReference type="Pfam" id="PF06455">
    <property type="entry name" value="NADH5_C"/>
    <property type="match status" value="1"/>
</dbReference>
<dbReference type="Pfam" id="PF00361">
    <property type="entry name" value="Proton_antipo_M"/>
    <property type="match status" value="1"/>
</dbReference>
<dbReference type="Pfam" id="PF00662">
    <property type="entry name" value="Proton_antipo_N"/>
    <property type="match status" value="1"/>
</dbReference>
<dbReference type="PRINTS" id="PR01434">
    <property type="entry name" value="NADHDHGNASE5"/>
</dbReference>
<reference key="1">
    <citation type="journal article" date="1996" name="Genetics">
        <title>The complete mitochondrial DNA sequence of the bichir (Polypterus ornatipinnis), a basal ray-finned fish: ancient establishment of the consensus vertebrate gene order.</title>
        <authorList>
            <person name="Noack K."/>
            <person name="Zardoya R."/>
            <person name="Meyer A."/>
        </authorList>
    </citation>
    <scope>NUCLEOTIDE SEQUENCE [GENOMIC DNA]</scope>
</reference>
<organism>
    <name type="scientific">Polypterus ornatipinnis</name>
    <name type="common">Ornate bichir</name>
    <dbReference type="NCBI Taxonomy" id="49895"/>
    <lineage>
        <taxon>Eukaryota</taxon>
        <taxon>Metazoa</taxon>
        <taxon>Chordata</taxon>
        <taxon>Craniata</taxon>
        <taxon>Vertebrata</taxon>
        <taxon>Euteleostomi</taxon>
        <taxon>Actinopterygii</taxon>
        <taxon>Polypteriformes</taxon>
        <taxon>Polypteridae</taxon>
        <taxon>Polypterus</taxon>
    </lineage>
</organism>
<accession>Q95918</accession>
<name>NU5M_POLOR</name>